<name>F16PA_YERPG</name>
<protein>
    <recommendedName>
        <fullName evidence="1">Fructose-1,6-bisphosphatase class 1</fullName>
        <shortName evidence="1">FBPase class 1</shortName>
        <ecNumber evidence="1">3.1.3.11</ecNumber>
    </recommendedName>
    <alternativeName>
        <fullName evidence="1">D-fructose-1,6-bisphosphate 1-phosphohydrolase class 1</fullName>
    </alternativeName>
</protein>
<reference key="1">
    <citation type="journal article" date="2010" name="J. Bacteriol.">
        <title>Genome sequence of the deep-rooted Yersinia pestis strain Angola reveals new insights into the evolution and pangenome of the plague bacterium.</title>
        <authorList>
            <person name="Eppinger M."/>
            <person name="Worsham P.L."/>
            <person name="Nikolich M.P."/>
            <person name="Riley D.R."/>
            <person name="Sebastian Y."/>
            <person name="Mou S."/>
            <person name="Achtman M."/>
            <person name="Lindler L.E."/>
            <person name="Ravel J."/>
        </authorList>
    </citation>
    <scope>NUCLEOTIDE SEQUENCE [LARGE SCALE GENOMIC DNA]</scope>
    <source>
        <strain>Angola</strain>
    </source>
</reference>
<organism>
    <name type="scientific">Yersinia pestis bv. Antiqua (strain Angola)</name>
    <dbReference type="NCBI Taxonomy" id="349746"/>
    <lineage>
        <taxon>Bacteria</taxon>
        <taxon>Pseudomonadati</taxon>
        <taxon>Pseudomonadota</taxon>
        <taxon>Gammaproteobacteria</taxon>
        <taxon>Enterobacterales</taxon>
        <taxon>Yersiniaceae</taxon>
        <taxon>Yersinia</taxon>
    </lineage>
</organism>
<accession>A9R579</accession>
<evidence type="ECO:0000255" key="1">
    <source>
        <dbReference type="HAMAP-Rule" id="MF_01855"/>
    </source>
</evidence>
<evidence type="ECO:0000305" key="2"/>
<dbReference type="EC" id="3.1.3.11" evidence="1"/>
<dbReference type="EMBL" id="CP000901">
    <property type="protein sequence ID" value="ABX86913.1"/>
    <property type="status" value="ALT_INIT"/>
    <property type="molecule type" value="Genomic_DNA"/>
</dbReference>
<dbReference type="RefSeq" id="WP_011191626.1">
    <property type="nucleotide sequence ID" value="NZ_CP009935.1"/>
</dbReference>
<dbReference type="SMR" id="A9R579"/>
<dbReference type="GeneID" id="96663958"/>
<dbReference type="KEGG" id="ypg:YpAngola_A3966"/>
<dbReference type="PATRIC" id="fig|349746.12.peg.690"/>
<dbReference type="UniPathway" id="UPA00138"/>
<dbReference type="GO" id="GO:0005829">
    <property type="term" value="C:cytosol"/>
    <property type="evidence" value="ECO:0007669"/>
    <property type="project" value="TreeGrafter"/>
</dbReference>
<dbReference type="GO" id="GO:0042132">
    <property type="term" value="F:fructose 1,6-bisphosphate 1-phosphatase activity"/>
    <property type="evidence" value="ECO:0007669"/>
    <property type="project" value="UniProtKB-UniRule"/>
</dbReference>
<dbReference type="GO" id="GO:0000287">
    <property type="term" value="F:magnesium ion binding"/>
    <property type="evidence" value="ECO:0007669"/>
    <property type="project" value="UniProtKB-UniRule"/>
</dbReference>
<dbReference type="GO" id="GO:0030388">
    <property type="term" value="P:fructose 1,6-bisphosphate metabolic process"/>
    <property type="evidence" value="ECO:0007669"/>
    <property type="project" value="TreeGrafter"/>
</dbReference>
<dbReference type="GO" id="GO:0006002">
    <property type="term" value="P:fructose 6-phosphate metabolic process"/>
    <property type="evidence" value="ECO:0007669"/>
    <property type="project" value="TreeGrafter"/>
</dbReference>
<dbReference type="GO" id="GO:0006000">
    <property type="term" value="P:fructose metabolic process"/>
    <property type="evidence" value="ECO:0007669"/>
    <property type="project" value="TreeGrafter"/>
</dbReference>
<dbReference type="GO" id="GO:0006094">
    <property type="term" value="P:gluconeogenesis"/>
    <property type="evidence" value="ECO:0007669"/>
    <property type="project" value="UniProtKB-UniRule"/>
</dbReference>
<dbReference type="GO" id="GO:0005986">
    <property type="term" value="P:sucrose biosynthetic process"/>
    <property type="evidence" value="ECO:0007669"/>
    <property type="project" value="TreeGrafter"/>
</dbReference>
<dbReference type="CDD" id="cd00354">
    <property type="entry name" value="FBPase"/>
    <property type="match status" value="1"/>
</dbReference>
<dbReference type="FunFam" id="3.30.540.10:FF:000002">
    <property type="entry name" value="Fructose-1,6-bisphosphatase class 1"/>
    <property type="match status" value="1"/>
</dbReference>
<dbReference type="FunFam" id="3.40.190.80:FF:000001">
    <property type="entry name" value="Fructose-1,6-bisphosphatase class 1"/>
    <property type="match status" value="1"/>
</dbReference>
<dbReference type="Gene3D" id="3.40.190.80">
    <property type="match status" value="1"/>
</dbReference>
<dbReference type="Gene3D" id="3.30.540.10">
    <property type="entry name" value="Fructose-1,6-Bisphosphatase, subunit A, domain 1"/>
    <property type="match status" value="1"/>
</dbReference>
<dbReference type="HAMAP" id="MF_01855">
    <property type="entry name" value="FBPase_class1"/>
    <property type="match status" value="1"/>
</dbReference>
<dbReference type="InterPro" id="IPR044015">
    <property type="entry name" value="FBPase_C_dom"/>
</dbReference>
<dbReference type="InterPro" id="IPR000146">
    <property type="entry name" value="FBPase_class-1"/>
</dbReference>
<dbReference type="InterPro" id="IPR033391">
    <property type="entry name" value="FBPase_N"/>
</dbReference>
<dbReference type="InterPro" id="IPR028343">
    <property type="entry name" value="FBPtase"/>
</dbReference>
<dbReference type="InterPro" id="IPR020548">
    <property type="entry name" value="Fructose_bisphosphatase_AS"/>
</dbReference>
<dbReference type="NCBIfam" id="NF006778">
    <property type="entry name" value="PRK09293.1-1"/>
    <property type="match status" value="1"/>
</dbReference>
<dbReference type="PANTHER" id="PTHR11556">
    <property type="entry name" value="FRUCTOSE-1,6-BISPHOSPHATASE-RELATED"/>
    <property type="match status" value="1"/>
</dbReference>
<dbReference type="PANTHER" id="PTHR11556:SF35">
    <property type="entry name" value="SEDOHEPTULOSE-1,7-BISPHOSPHATASE, CHLOROPLASTIC"/>
    <property type="match status" value="1"/>
</dbReference>
<dbReference type="Pfam" id="PF00316">
    <property type="entry name" value="FBPase"/>
    <property type="match status" value="1"/>
</dbReference>
<dbReference type="Pfam" id="PF18913">
    <property type="entry name" value="FBPase_C"/>
    <property type="match status" value="1"/>
</dbReference>
<dbReference type="PIRSF" id="PIRSF500210">
    <property type="entry name" value="FBPtase"/>
    <property type="match status" value="1"/>
</dbReference>
<dbReference type="PIRSF" id="PIRSF000904">
    <property type="entry name" value="FBPtase_SBPase"/>
    <property type="match status" value="1"/>
</dbReference>
<dbReference type="PRINTS" id="PR00115">
    <property type="entry name" value="F16BPHPHTASE"/>
</dbReference>
<dbReference type="SUPFAM" id="SSF56655">
    <property type="entry name" value="Carbohydrate phosphatase"/>
    <property type="match status" value="1"/>
</dbReference>
<dbReference type="PROSITE" id="PS00124">
    <property type="entry name" value="FBPASE"/>
    <property type="match status" value="1"/>
</dbReference>
<proteinExistence type="inferred from homology"/>
<gene>
    <name evidence="1" type="primary">fbp</name>
    <name type="ordered locus">YpAngola_A3966</name>
</gene>
<feature type="chain" id="PRO_0000364761" description="Fructose-1,6-bisphosphatase class 1">
    <location>
        <begin position="1"/>
        <end position="337"/>
    </location>
</feature>
<feature type="binding site" evidence="1">
    <location>
        <position position="89"/>
    </location>
    <ligand>
        <name>Mg(2+)</name>
        <dbReference type="ChEBI" id="CHEBI:18420"/>
        <label>1</label>
    </ligand>
</feature>
<feature type="binding site" evidence="1">
    <location>
        <position position="112"/>
    </location>
    <ligand>
        <name>Mg(2+)</name>
        <dbReference type="ChEBI" id="CHEBI:18420"/>
        <label>1</label>
    </ligand>
</feature>
<feature type="binding site" evidence="1">
    <location>
        <position position="112"/>
    </location>
    <ligand>
        <name>Mg(2+)</name>
        <dbReference type="ChEBI" id="CHEBI:18420"/>
        <label>2</label>
    </ligand>
</feature>
<feature type="binding site" evidence="1">
    <location>
        <position position="114"/>
    </location>
    <ligand>
        <name>Mg(2+)</name>
        <dbReference type="ChEBI" id="CHEBI:18420"/>
        <label>1</label>
    </ligand>
</feature>
<feature type="binding site" evidence="1">
    <location>
        <begin position="115"/>
        <end position="118"/>
    </location>
    <ligand>
        <name>substrate</name>
    </ligand>
</feature>
<feature type="binding site" evidence="1">
    <location>
        <position position="115"/>
    </location>
    <ligand>
        <name>Mg(2+)</name>
        <dbReference type="ChEBI" id="CHEBI:18420"/>
        <label>2</label>
    </ligand>
</feature>
<feature type="binding site" evidence="1">
    <location>
        <position position="208"/>
    </location>
    <ligand>
        <name>substrate</name>
    </ligand>
</feature>
<feature type="binding site" evidence="1">
    <location>
        <position position="241"/>
    </location>
    <ligand>
        <name>substrate</name>
    </ligand>
</feature>
<feature type="binding site" evidence="1">
    <location>
        <position position="271"/>
    </location>
    <ligand>
        <name>substrate</name>
    </ligand>
</feature>
<feature type="binding site" evidence="1">
    <location>
        <position position="277"/>
    </location>
    <ligand>
        <name>Mg(2+)</name>
        <dbReference type="ChEBI" id="CHEBI:18420"/>
        <label>2</label>
    </ligand>
</feature>
<sequence>MKTLGEFIVEKQLDFSHATGELTALLSAIKLGAKIIHRDINKAGLVDILGASGVSNIQGEDQMKLDLFANEKLKAALKARGEVAGIASEEEDDIVIFDGGRAENAKYVVLMDPLDGSSNIDVNVSVGTIFSIYRRITPFGTPITEEDFLQPGTKQVAAGYVVYGSSTMLVYTTGYGVHAFTYDPSLGVFCLSHEKVRYPATGCMYSINEGNYIKFPLGVKKYIKYCQEQDEATKRPYTSRYIGSLVADFHRNLLKGGIYIYPSTASHPQGKLRLLYECNPMAFLAEQAGGKATDGVNRILDIVPEKLHQRAPFFVGTKSMVEDAEGFIAKFPDEEAK</sequence>
<comment type="catalytic activity">
    <reaction evidence="1">
        <text>beta-D-fructose 1,6-bisphosphate + H2O = beta-D-fructose 6-phosphate + phosphate</text>
        <dbReference type="Rhea" id="RHEA:11064"/>
        <dbReference type="ChEBI" id="CHEBI:15377"/>
        <dbReference type="ChEBI" id="CHEBI:32966"/>
        <dbReference type="ChEBI" id="CHEBI:43474"/>
        <dbReference type="ChEBI" id="CHEBI:57634"/>
        <dbReference type="EC" id="3.1.3.11"/>
    </reaction>
</comment>
<comment type="cofactor">
    <cofactor evidence="1">
        <name>Mg(2+)</name>
        <dbReference type="ChEBI" id="CHEBI:18420"/>
    </cofactor>
    <text evidence="1">Binds 2 magnesium ions per subunit.</text>
</comment>
<comment type="pathway">
    <text evidence="1">Carbohydrate biosynthesis; gluconeogenesis.</text>
</comment>
<comment type="subunit">
    <text evidence="1">Homotetramer.</text>
</comment>
<comment type="subcellular location">
    <subcellularLocation>
        <location evidence="1">Cytoplasm</location>
    </subcellularLocation>
</comment>
<comment type="similarity">
    <text evidence="1">Belongs to the FBPase class 1 family.</text>
</comment>
<comment type="sequence caution" evidence="2">
    <conflict type="erroneous initiation">
        <sequence resource="EMBL-CDS" id="ABX86913"/>
    </conflict>
</comment>
<keyword id="KW-0119">Carbohydrate metabolism</keyword>
<keyword id="KW-0963">Cytoplasm</keyword>
<keyword id="KW-0378">Hydrolase</keyword>
<keyword id="KW-0460">Magnesium</keyword>
<keyword id="KW-0479">Metal-binding</keyword>